<proteinExistence type="inferred from homology"/>
<sequence>MENILLGIVQGLTEFLPVSSSGHLAIFTAIFNKTPDVGYFAFLHLATFLAVVIFVKKEIFEIINGVFKKDEKYITLSLKLFVSMIPAAIVGIFFEDFIKSIFSETFFIGVFLAITGVFMLLSDKMDKNLKTITKIPYLDAFIIGIFQAFSVLPGISRSGSTLFAALLLGVKKEDAVKYSFLMSLPVIFGAGVLEMQKTVITKEYVYGFIVAFLTGILGLHLLKKMVIAGKLKFFGYYCFLASLFVIFYI</sequence>
<name>UPPP_METVS</name>
<keyword id="KW-1003">Cell membrane</keyword>
<keyword id="KW-0378">Hydrolase</keyword>
<keyword id="KW-0472">Membrane</keyword>
<keyword id="KW-0812">Transmembrane</keyword>
<keyword id="KW-1133">Transmembrane helix</keyword>
<dbReference type="EC" id="3.6.1.27" evidence="1"/>
<dbReference type="EMBL" id="CP000742">
    <property type="protein sequence ID" value="ABR54373.1"/>
    <property type="molecule type" value="Genomic_DNA"/>
</dbReference>
<dbReference type="RefSeq" id="WP_011972276.1">
    <property type="nucleotide sequence ID" value="NC_009634.1"/>
</dbReference>
<dbReference type="SMR" id="A6UPF1"/>
<dbReference type="STRING" id="406327.Mevan_0466"/>
<dbReference type="GeneID" id="5325372"/>
<dbReference type="KEGG" id="mvn:Mevan_0466"/>
<dbReference type="eggNOG" id="arCOG04761">
    <property type="taxonomic scope" value="Archaea"/>
</dbReference>
<dbReference type="HOGENOM" id="CLU_060296_1_2_2"/>
<dbReference type="OrthoDB" id="65864at2157"/>
<dbReference type="Proteomes" id="UP000001107">
    <property type="component" value="Chromosome"/>
</dbReference>
<dbReference type="GO" id="GO:0005886">
    <property type="term" value="C:plasma membrane"/>
    <property type="evidence" value="ECO:0007669"/>
    <property type="project" value="UniProtKB-SubCell"/>
</dbReference>
<dbReference type="GO" id="GO:0050380">
    <property type="term" value="F:undecaprenyl-diphosphatase activity"/>
    <property type="evidence" value="ECO:0007669"/>
    <property type="project" value="UniProtKB-UniRule"/>
</dbReference>
<dbReference type="HAMAP" id="MF_01006">
    <property type="entry name" value="Undec_diphosphatase"/>
    <property type="match status" value="1"/>
</dbReference>
<dbReference type="InterPro" id="IPR003824">
    <property type="entry name" value="UppP"/>
</dbReference>
<dbReference type="PANTHER" id="PTHR30622">
    <property type="entry name" value="UNDECAPRENYL-DIPHOSPHATASE"/>
    <property type="match status" value="1"/>
</dbReference>
<dbReference type="PANTHER" id="PTHR30622:SF4">
    <property type="entry name" value="UNDECAPRENYL-DIPHOSPHATASE"/>
    <property type="match status" value="1"/>
</dbReference>
<dbReference type="Pfam" id="PF02673">
    <property type="entry name" value="BacA"/>
    <property type="match status" value="1"/>
</dbReference>
<accession>A6UPF1</accession>
<organism>
    <name type="scientific">Methanococcus vannielii (strain ATCC 35089 / DSM 1224 / JCM 13029 / OCM 148 / SB)</name>
    <dbReference type="NCBI Taxonomy" id="406327"/>
    <lineage>
        <taxon>Archaea</taxon>
        <taxon>Methanobacteriati</taxon>
        <taxon>Methanobacteriota</taxon>
        <taxon>Methanomada group</taxon>
        <taxon>Methanococci</taxon>
        <taxon>Methanococcales</taxon>
        <taxon>Methanococcaceae</taxon>
        <taxon>Methanococcus</taxon>
    </lineage>
</organism>
<reference key="1">
    <citation type="submission" date="2007-06" db="EMBL/GenBank/DDBJ databases">
        <title>Complete sequence of Methanococcus vannielii SB.</title>
        <authorList>
            <consortium name="US DOE Joint Genome Institute"/>
            <person name="Copeland A."/>
            <person name="Lucas S."/>
            <person name="Lapidus A."/>
            <person name="Barry K."/>
            <person name="Glavina del Rio T."/>
            <person name="Dalin E."/>
            <person name="Tice H."/>
            <person name="Pitluck S."/>
            <person name="Chain P."/>
            <person name="Malfatti S."/>
            <person name="Shin M."/>
            <person name="Vergez L."/>
            <person name="Schmutz J."/>
            <person name="Larimer F."/>
            <person name="Land M."/>
            <person name="Hauser L."/>
            <person name="Kyrpides N."/>
            <person name="Anderson I."/>
            <person name="Sieprawska-Lupa M."/>
            <person name="Whitman W.B."/>
            <person name="Richardson P."/>
        </authorList>
    </citation>
    <scope>NUCLEOTIDE SEQUENCE [LARGE SCALE GENOMIC DNA]</scope>
    <source>
        <strain>ATCC 35089 / DSM 1224 / JCM 13029 / OCM 148 / SB</strain>
    </source>
</reference>
<gene>
    <name evidence="1" type="primary">uppP</name>
    <name type="ordered locus">Mevan_0466</name>
</gene>
<evidence type="ECO:0000255" key="1">
    <source>
        <dbReference type="HAMAP-Rule" id="MF_01006"/>
    </source>
</evidence>
<protein>
    <recommendedName>
        <fullName evidence="1">Undecaprenyl-diphosphatase</fullName>
        <ecNumber evidence="1">3.6.1.27</ecNumber>
    </recommendedName>
    <alternativeName>
        <fullName evidence="1">Undecaprenyl pyrophosphate phosphatase</fullName>
    </alternativeName>
</protein>
<comment type="function">
    <text evidence="1">Catalyzes the dephosphorylation of undecaprenyl diphosphate (UPP).</text>
</comment>
<comment type="catalytic activity">
    <reaction evidence="1">
        <text>di-trans,octa-cis-undecaprenyl diphosphate + H2O = di-trans,octa-cis-undecaprenyl phosphate + phosphate + H(+)</text>
        <dbReference type="Rhea" id="RHEA:28094"/>
        <dbReference type="ChEBI" id="CHEBI:15377"/>
        <dbReference type="ChEBI" id="CHEBI:15378"/>
        <dbReference type="ChEBI" id="CHEBI:43474"/>
        <dbReference type="ChEBI" id="CHEBI:58405"/>
        <dbReference type="ChEBI" id="CHEBI:60392"/>
        <dbReference type="EC" id="3.6.1.27"/>
    </reaction>
</comment>
<comment type="subcellular location">
    <subcellularLocation>
        <location evidence="1">Cell membrane</location>
        <topology evidence="1">Multi-pass membrane protein</topology>
    </subcellularLocation>
</comment>
<comment type="similarity">
    <text evidence="1">Belongs to the UppP family.</text>
</comment>
<feature type="chain" id="PRO_1000062805" description="Undecaprenyl-diphosphatase">
    <location>
        <begin position="1"/>
        <end position="249"/>
    </location>
</feature>
<feature type="transmembrane region" description="Helical" evidence="1">
    <location>
        <begin position="11"/>
        <end position="31"/>
    </location>
</feature>
<feature type="transmembrane region" description="Helical" evidence="1">
    <location>
        <begin position="35"/>
        <end position="55"/>
    </location>
</feature>
<feature type="transmembrane region" description="Helical" evidence="1">
    <location>
        <begin position="74"/>
        <end position="94"/>
    </location>
</feature>
<feature type="transmembrane region" description="Helical" evidence="1">
    <location>
        <begin position="101"/>
        <end position="121"/>
    </location>
</feature>
<feature type="transmembrane region" description="Helical" evidence="1">
    <location>
        <begin position="135"/>
        <end position="155"/>
    </location>
</feature>
<feature type="transmembrane region" description="Helical" evidence="1">
    <location>
        <begin position="175"/>
        <end position="195"/>
    </location>
</feature>
<feature type="transmembrane region" description="Helical" evidence="1">
    <location>
        <begin position="208"/>
        <end position="228"/>
    </location>
</feature>
<feature type="transmembrane region" description="Helical" evidence="1">
    <location>
        <begin position="229"/>
        <end position="249"/>
    </location>
</feature>